<protein>
    <recommendedName>
        <fullName evidence="1">Guanylate kinase</fullName>
        <ecNumber evidence="1">2.7.4.8</ecNumber>
    </recommendedName>
    <alternativeName>
        <fullName evidence="1">GMP kinase</fullName>
    </alternativeName>
</protein>
<organism>
    <name type="scientific">Pseudomonas savastanoi pv. phaseolicola (strain 1448A / Race 6)</name>
    <name type="common">Pseudomonas syringae pv. phaseolicola (strain 1448A / Race 6)</name>
    <dbReference type="NCBI Taxonomy" id="264730"/>
    <lineage>
        <taxon>Bacteria</taxon>
        <taxon>Pseudomonadati</taxon>
        <taxon>Pseudomonadota</taxon>
        <taxon>Gammaproteobacteria</taxon>
        <taxon>Pseudomonadales</taxon>
        <taxon>Pseudomonadaceae</taxon>
        <taxon>Pseudomonas</taxon>
    </lineage>
</organism>
<evidence type="ECO:0000255" key="1">
    <source>
        <dbReference type="HAMAP-Rule" id="MF_00328"/>
    </source>
</evidence>
<evidence type="ECO:0000305" key="2"/>
<dbReference type="EC" id="2.7.4.8" evidence="1"/>
<dbReference type="EMBL" id="CP000058">
    <property type="protein sequence ID" value="AAZ34297.1"/>
    <property type="status" value="ALT_INIT"/>
    <property type="molecule type" value="Genomic_DNA"/>
</dbReference>
<dbReference type="RefSeq" id="WP_002551501.1">
    <property type="nucleotide sequence ID" value="NC_005773.3"/>
</dbReference>
<dbReference type="SMR" id="Q48Q15"/>
<dbReference type="GeneID" id="61867550"/>
<dbReference type="KEGG" id="psp:PSPPH_0199"/>
<dbReference type="eggNOG" id="COG0194">
    <property type="taxonomic scope" value="Bacteria"/>
</dbReference>
<dbReference type="HOGENOM" id="CLU_001715_1_0_6"/>
<dbReference type="Proteomes" id="UP000000551">
    <property type="component" value="Chromosome"/>
</dbReference>
<dbReference type="GO" id="GO:0005829">
    <property type="term" value="C:cytosol"/>
    <property type="evidence" value="ECO:0007669"/>
    <property type="project" value="TreeGrafter"/>
</dbReference>
<dbReference type="GO" id="GO:0005524">
    <property type="term" value="F:ATP binding"/>
    <property type="evidence" value="ECO:0007669"/>
    <property type="project" value="UniProtKB-UniRule"/>
</dbReference>
<dbReference type="GO" id="GO:0004385">
    <property type="term" value="F:guanylate kinase activity"/>
    <property type="evidence" value="ECO:0007669"/>
    <property type="project" value="UniProtKB-UniRule"/>
</dbReference>
<dbReference type="CDD" id="cd00071">
    <property type="entry name" value="GMPK"/>
    <property type="match status" value="1"/>
</dbReference>
<dbReference type="FunFam" id="3.40.50.300:FF:000855">
    <property type="entry name" value="Guanylate kinase"/>
    <property type="match status" value="1"/>
</dbReference>
<dbReference type="FunFam" id="3.30.63.10:FF:000002">
    <property type="entry name" value="Guanylate kinase 1"/>
    <property type="match status" value="1"/>
</dbReference>
<dbReference type="Gene3D" id="3.30.63.10">
    <property type="entry name" value="Guanylate Kinase phosphate binding domain"/>
    <property type="match status" value="1"/>
</dbReference>
<dbReference type="Gene3D" id="3.40.50.300">
    <property type="entry name" value="P-loop containing nucleotide triphosphate hydrolases"/>
    <property type="match status" value="1"/>
</dbReference>
<dbReference type="HAMAP" id="MF_00328">
    <property type="entry name" value="Guanylate_kinase"/>
    <property type="match status" value="1"/>
</dbReference>
<dbReference type="InterPro" id="IPR008145">
    <property type="entry name" value="GK/Ca_channel_bsu"/>
</dbReference>
<dbReference type="InterPro" id="IPR008144">
    <property type="entry name" value="Guanylate_kin-like_dom"/>
</dbReference>
<dbReference type="InterPro" id="IPR017665">
    <property type="entry name" value="Guanylate_kinase"/>
</dbReference>
<dbReference type="InterPro" id="IPR020590">
    <property type="entry name" value="Guanylate_kinase_CS"/>
</dbReference>
<dbReference type="InterPro" id="IPR027417">
    <property type="entry name" value="P-loop_NTPase"/>
</dbReference>
<dbReference type="NCBIfam" id="TIGR03263">
    <property type="entry name" value="guanyl_kin"/>
    <property type="match status" value="1"/>
</dbReference>
<dbReference type="PANTHER" id="PTHR23117:SF13">
    <property type="entry name" value="GUANYLATE KINASE"/>
    <property type="match status" value="1"/>
</dbReference>
<dbReference type="PANTHER" id="PTHR23117">
    <property type="entry name" value="GUANYLATE KINASE-RELATED"/>
    <property type="match status" value="1"/>
</dbReference>
<dbReference type="Pfam" id="PF00625">
    <property type="entry name" value="Guanylate_kin"/>
    <property type="match status" value="1"/>
</dbReference>
<dbReference type="SMART" id="SM00072">
    <property type="entry name" value="GuKc"/>
    <property type="match status" value="1"/>
</dbReference>
<dbReference type="SUPFAM" id="SSF52540">
    <property type="entry name" value="P-loop containing nucleoside triphosphate hydrolases"/>
    <property type="match status" value="1"/>
</dbReference>
<dbReference type="PROSITE" id="PS00856">
    <property type="entry name" value="GUANYLATE_KINASE_1"/>
    <property type="match status" value="1"/>
</dbReference>
<dbReference type="PROSITE" id="PS50052">
    <property type="entry name" value="GUANYLATE_KINASE_2"/>
    <property type="match status" value="1"/>
</dbReference>
<gene>
    <name evidence="1" type="primary">gmk</name>
    <name type="ordered locus">PSPPH_0199</name>
</gene>
<accession>Q48Q15</accession>
<name>KGUA_PSE14</name>
<sequence>MTHITGTLYIISAPSGAGKTSLVKALMDAQQEPQHGAQAKIRVSVSHTTRAMRPGEVNGVNYNFVDRAEFVRMIEHGDFLEQAEVFGNLYGTSQSHLQQTLDEGHDLILEIDWQGARQVRAQMPQARSIFILPPTQQALRQRLTNRGQDSDEIIEARMREAVSEMSHYNEYEYVVVNDDFAGALEDLKAIFRANRLTQQHQQEQYSELFQELLA</sequence>
<feature type="chain" id="PRO_0000266373" description="Guanylate kinase">
    <location>
        <begin position="1"/>
        <end position="214"/>
    </location>
</feature>
<feature type="domain" description="Guanylate kinase-like" evidence="1">
    <location>
        <begin position="6"/>
        <end position="192"/>
    </location>
</feature>
<feature type="binding site" evidence="1">
    <location>
        <begin position="13"/>
        <end position="20"/>
    </location>
    <ligand>
        <name>ATP</name>
        <dbReference type="ChEBI" id="CHEBI:30616"/>
    </ligand>
</feature>
<proteinExistence type="inferred from homology"/>
<keyword id="KW-0067">ATP-binding</keyword>
<keyword id="KW-0963">Cytoplasm</keyword>
<keyword id="KW-0418">Kinase</keyword>
<keyword id="KW-0547">Nucleotide-binding</keyword>
<keyword id="KW-0808">Transferase</keyword>
<reference key="1">
    <citation type="journal article" date="2005" name="J. Bacteriol.">
        <title>Whole-genome sequence analysis of Pseudomonas syringae pv. phaseolicola 1448A reveals divergence among pathovars in genes involved in virulence and transposition.</title>
        <authorList>
            <person name="Joardar V."/>
            <person name="Lindeberg M."/>
            <person name="Jackson R.W."/>
            <person name="Selengut J."/>
            <person name="Dodson R."/>
            <person name="Brinkac L.M."/>
            <person name="Daugherty S.C."/>
            <person name="DeBoy R.T."/>
            <person name="Durkin A.S."/>
            <person name="Gwinn Giglio M."/>
            <person name="Madupu R."/>
            <person name="Nelson W.C."/>
            <person name="Rosovitz M.J."/>
            <person name="Sullivan S.A."/>
            <person name="Crabtree J."/>
            <person name="Creasy T."/>
            <person name="Davidsen T.M."/>
            <person name="Haft D.H."/>
            <person name="Zafar N."/>
            <person name="Zhou L."/>
            <person name="Halpin R."/>
            <person name="Holley T."/>
            <person name="Khouri H.M."/>
            <person name="Feldblyum T.V."/>
            <person name="White O."/>
            <person name="Fraser C.M."/>
            <person name="Chatterjee A.K."/>
            <person name="Cartinhour S."/>
            <person name="Schneider D."/>
            <person name="Mansfield J.W."/>
            <person name="Collmer A."/>
            <person name="Buell R."/>
        </authorList>
    </citation>
    <scope>NUCLEOTIDE SEQUENCE [LARGE SCALE GENOMIC DNA]</scope>
    <source>
        <strain>1448A / Race 6</strain>
    </source>
</reference>
<comment type="function">
    <text evidence="1">Essential for recycling GMP and indirectly, cGMP.</text>
</comment>
<comment type="catalytic activity">
    <reaction evidence="1">
        <text>GMP + ATP = GDP + ADP</text>
        <dbReference type="Rhea" id="RHEA:20780"/>
        <dbReference type="ChEBI" id="CHEBI:30616"/>
        <dbReference type="ChEBI" id="CHEBI:58115"/>
        <dbReference type="ChEBI" id="CHEBI:58189"/>
        <dbReference type="ChEBI" id="CHEBI:456216"/>
        <dbReference type="EC" id="2.7.4.8"/>
    </reaction>
</comment>
<comment type="subcellular location">
    <subcellularLocation>
        <location evidence="1">Cytoplasm</location>
    </subcellularLocation>
</comment>
<comment type="similarity">
    <text evidence="1">Belongs to the guanylate kinase family.</text>
</comment>
<comment type="sequence caution" evidence="2">
    <conflict type="erroneous initiation">
        <sequence resource="EMBL-CDS" id="AAZ34297"/>
    </conflict>
</comment>